<organism>
    <name type="scientific">Yersinia pestis</name>
    <dbReference type="NCBI Taxonomy" id="632"/>
    <lineage>
        <taxon>Bacteria</taxon>
        <taxon>Pseudomonadati</taxon>
        <taxon>Pseudomonadota</taxon>
        <taxon>Gammaproteobacteria</taxon>
        <taxon>Enterobacterales</taxon>
        <taxon>Yersiniaceae</taxon>
        <taxon>Yersinia</taxon>
    </lineage>
</organism>
<reference key="1">
    <citation type="journal article" date="2001" name="Nature">
        <title>Genome sequence of Yersinia pestis, the causative agent of plague.</title>
        <authorList>
            <person name="Parkhill J."/>
            <person name="Wren B.W."/>
            <person name="Thomson N.R."/>
            <person name="Titball R.W."/>
            <person name="Holden M.T.G."/>
            <person name="Prentice M.B."/>
            <person name="Sebaihia M."/>
            <person name="James K.D."/>
            <person name="Churcher C.M."/>
            <person name="Mungall K.L."/>
            <person name="Baker S."/>
            <person name="Basham D."/>
            <person name="Bentley S.D."/>
            <person name="Brooks K."/>
            <person name="Cerdeno-Tarraga A.-M."/>
            <person name="Chillingworth T."/>
            <person name="Cronin A."/>
            <person name="Davies R.M."/>
            <person name="Davis P."/>
            <person name="Dougan G."/>
            <person name="Feltwell T."/>
            <person name="Hamlin N."/>
            <person name="Holroyd S."/>
            <person name="Jagels K."/>
            <person name="Karlyshev A.V."/>
            <person name="Leather S."/>
            <person name="Moule S."/>
            <person name="Oyston P.C.F."/>
            <person name="Quail M.A."/>
            <person name="Rutherford K.M."/>
            <person name="Simmonds M."/>
            <person name="Skelton J."/>
            <person name="Stevens K."/>
            <person name="Whitehead S."/>
            <person name="Barrell B.G."/>
        </authorList>
    </citation>
    <scope>NUCLEOTIDE SEQUENCE [LARGE SCALE GENOMIC DNA]</scope>
    <source>
        <strain>CO-92 / Biovar Orientalis</strain>
    </source>
</reference>
<reference key="2">
    <citation type="journal article" date="2002" name="J. Bacteriol.">
        <title>Genome sequence of Yersinia pestis KIM.</title>
        <authorList>
            <person name="Deng W."/>
            <person name="Burland V."/>
            <person name="Plunkett G. III"/>
            <person name="Boutin A."/>
            <person name="Mayhew G.F."/>
            <person name="Liss P."/>
            <person name="Perna N.T."/>
            <person name="Rose D.J."/>
            <person name="Mau B."/>
            <person name="Zhou S."/>
            <person name="Schwartz D.C."/>
            <person name="Fetherston J.D."/>
            <person name="Lindler L.E."/>
            <person name="Brubaker R.R."/>
            <person name="Plano G.V."/>
            <person name="Straley S.C."/>
            <person name="McDonough K.A."/>
            <person name="Nilles M.L."/>
            <person name="Matson J.S."/>
            <person name="Blattner F.R."/>
            <person name="Perry R.D."/>
        </authorList>
    </citation>
    <scope>NUCLEOTIDE SEQUENCE [LARGE SCALE GENOMIC DNA]</scope>
    <source>
        <strain>KIM10+ / Biovar Mediaevalis</strain>
    </source>
</reference>
<reference key="3">
    <citation type="journal article" date="2004" name="DNA Res.">
        <title>Complete genome sequence of Yersinia pestis strain 91001, an isolate avirulent to humans.</title>
        <authorList>
            <person name="Song Y."/>
            <person name="Tong Z."/>
            <person name="Wang J."/>
            <person name="Wang L."/>
            <person name="Guo Z."/>
            <person name="Han Y."/>
            <person name="Zhang J."/>
            <person name="Pei D."/>
            <person name="Zhou D."/>
            <person name="Qin H."/>
            <person name="Pang X."/>
            <person name="Han Y."/>
            <person name="Zhai J."/>
            <person name="Li M."/>
            <person name="Cui B."/>
            <person name="Qi Z."/>
            <person name="Jin L."/>
            <person name="Dai R."/>
            <person name="Chen F."/>
            <person name="Li S."/>
            <person name="Ye C."/>
            <person name="Du Z."/>
            <person name="Lin W."/>
            <person name="Wang J."/>
            <person name="Yu J."/>
            <person name="Yang H."/>
            <person name="Wang J."/>
            <person name="Huang P."/>
            <person name="Yang R."/>
        </authorList>
    </citation>
    <scope>NUCLEOTIDE SEQUENCE [LARGE SCALE GENOMIC DNA]</scope>
    <source>
        <strain>91001 / Biovar Mediaevalis</strain>
    </source>
</reference>
<feature type="signal peptide" evidence="1">
    <location>
        <begin position="1"/>
        <end position="23"/>
    </location>
</feature>
<feature type="chain" id="PRO_0000025182" description="Maltoporin 2" evidence="1">
    <location>
        <begin position="24"/>
        <end position="419"/>
    </location>
</feature>
<feature type="site" description="Greasy slide, important in sugar transport" evidence="1">
    <location>
        <position position="32"/>
    </location>
</feature>
<feature type="site" description="Greasy slide, important in sugar transport" evidence="1">
    <location>
        <position position="63"/>
    </location>
</feature>
<feature type="site" description="Greasy slide, important in sugar transport" evidence="1">
    <location>
        <position position="250"/>
    </location>
</feature>
<feature type="site" description="Greasy slide, important in sugar transport" evidence="1">
    <location>
        <position position="418"/>
    </location>
</feature>
<feature type="sequence conflict" description="In Ref. 3; AAS63700." evidence="2" ref="3">
    <original>R</original>
    <variation>C</variation>
    <location>
        <position position="339"/>
    </location>
</feature>
<comment type="function">
    <text evidence="1">Involved in the transport of maltose and maltodextrins.</text>
</comment>
<comment type="catalytic activity">
    <reaction evidence="1">
        <text>beta-maltose(in) = beta-maltose(out)</text>
        <dbReference type="Rhea" id="RHEA:29731"/>
        <dbReference type="ChEBI" id="CHEBI:18147"/>
    </reaction>
</comment>
<comment type="subunit">
    <text evidence="1">Homotrimer formed of three 18-stranded antiparallel beta-barrels, containing three independent channels.</text>
</comment>
<comment type="subcellular location">
    <subcellularLocation>
        <location evidence="1">Cell outer membrane</location>
        <topology evidence="1">Multi-pass membrane protein</topology>
    </subcellularLocation>
</comment>
<comment type="induction">
    <text evidence="1 2">By maltose.</text>
</comment>
<comment type="similarity">
    <text evidence="1 2">Belongs to the porin LamB (TC 1.B.3) family.</text>
</comment>
<comment type="sequence caution" evidence="2">
    <conflict type="erroneous initiation">
        <sequence resource="EMBL-CDS" id="AAM86785"/>
    </conflict>
</comment>
<comment type="sequence caution" evidence="2">
    <conflict type="erroneous initiation">
        <sequence resource="EMBL-CDS" id="AAS63700"/>
    </conflict>
</comment>
<proteinExistence type="inferred from homology"/>
<protein>
    <recommendedName>
        <fullName evidence="1">Maltoporin 2</fullName>
    </recommendedName>
    <alternativeName>
        <fullName evidence="1">Maltose-inducible porin 2</fullName>
    </alternativeName>
</protein>
<accession>Q8ZHP0</accession>
<accession>Q0WII7</accession>
<keyword id="KW-0998">Cell outer membrane</keyword>
<keyword id="KW-0406">Ion transport</keyword>
<keyword id="KW-0472">Membrane</keyword>
<keyword id="KW-0626">Porin</keyword>
<keyword id="KW-1185">Reference proteome</keyword>
<keyword id="KW-0732">Signal</keyword>
<keyword id="KW-0762">Sugar transport</keyword>
<keyword id="KW-0812">Transmembrane</keyword>
<keyword id="KW-1134">Transmembrane beta strand</keyword>
<keyword id="KW-0813">Transport</keyword>
<dbReference type="EMBL" id="AL590842">
    <property type="protein sequence ID" value="CAL19520.1"/>
    <property type="molecule type" value="Genomic_DNA"/>
</dbReference>
<dbReference type="EMBL" id="AE009952">
    <property type="protein sequence ID" value="AAM86785.1"/>
    <property type="status" value="ALT_INIT"/>
    <property type="molecule type" value="Genomic_DNA"/>
</dbReference>
<dbReference type="EMBL" id="AE017042">
    <property type="protein sequence ID" value="AAS63700.1"/>
    <property type="status" value="ALT_INIT"/>
    <property type="molecule type" value="Genomic_DNA"/>
</dbReference>
<dbReference type="PIR" id="AF0104">
    <property type="entry name" value="AF0104"/>
</dbReference>
<dbReference type="RefSeq" id="WP_002215759.1">
    <property type="nucleotide sequence ID" value="NZ_WUCM01000018.1"/>
</dbReference>
<dbReference type="RefSeq" id="YP_002345901.1">
    <property type="nucleotide sequence ID" value="NC_003143.1"/>
</dbReference>
<dbReference type="SMR" id="Q8ZHP0"/>
<dbReference type="STRING" id="214092.YPO0850"/>
<dbReference type="PaxDb" id="214092-YPO0850"/>
<dbReference type="EnsemblBacteria" id="AAS63700">
    <property type="protein sequence ID" value="AAS63700"/>
    <property type="gene ID" value="YP_3547"/>
</dbReference>
<dbReference type="KEGG" id="ype:YPO0850"/>
<dbReference type="KEGG" id="ypk:y3235"/>
<dbReference type="KEGG" id="ypm:YP_3547"/>
<dbReference type="PATRIC" id="fig|214092.21.peg.1119"/>
<dbReference type="eggNOG" id="COG4580">
    <property type="taxonomic scope" value="Bacteria"/>
</dbReference>
<dbReference type="HOGENOM" id="CLU_032473_4_1_6"/>
<dbReference type="OMA" id="YYTYASW"/>
<dbReference type="OrthoDB" id="106611at2"/>
<dbReference type="Proteomes" id="UP000000815">
    <property type="component" value="Chromosome"/>
</dbReference>
<dbReference type="Proteomes" id="UP000001019">
    <property type="component" value="Chromosome"/>
</dbReference>
<dbReference type="Proteomes" id="UP000002490">
    <property type="component" value="Chromosome"/>
</dbReference>
<dbReference type="GO" id="GO:0009279">
    <property type="term" value="C:cell outer membrane"/>
    <property type="evidence" value="ECO:0000318"/>
    <property type="project" value="GO_Central"/>
</dbReference>
<dbReference type="GO" id="GO:0046930">
    <property type="term" value="C:pore complex"/>
    <property type="evidence" value="ECO:0007669"/>
    <property type="project" value="UniProtKB-KW"/>
</dbReference>
<dbReference type="GO" id="GO:0015144">
    <property type="term" value="F:carbohydrate transmembrane transporter activity"/>
    <property type="evidence" value="ECO:0000318"/>
    <property type="project" value="GO_Central"/>
</dbReference>
<dbReference type="GO" id="GO:0042958">
    <property type="term" value="F:maltodextrin transmembrane transporter activity"/>
    <property type="evidence" value="ECO:0007669"/>
    <property type="project" value="InterPro"/>
</dbReference>
<dbReference type="GO" id="GO:0015481">
    <property type="term" value="F:maltose transporting porin activity"/>
    <property type="evidence" value="ECO:0007669"/>
    <property type="project" value="InterPro"/>
</dbReference>
<dbReference type="GO" id="GO:0015288">
    <property type="term" value="F:porin activity"/>
    <property type="evidence" value="ECO:0000318"/>
    <property type="project" value="GO_Central"/>
</dbReference>
<dbReference type="GO" id="GO:0006811">
    <property type="term" value="P:monoatomic ion transport"/>
    <property type="evidence" value="ECO:0007669"/>
    <property type="project" value="UniProtKB-KW"/>
</dbReference>
<dbReference type="GO" id="GO:0015774">
    <property type="term" value="P:polysaccharide transport"/>
    <property type="evidence" value="ECO:0000318"/>
    <property type="project" value="GO_Central"/>
</dbReference>
<dbReference type="CDD" id="cd01346">
    <property type="entry name" value="Maltoporin-like"/>
    <property type="match status" value="1"/>
</dbReference>
<dbReference type="Gene3D" id="2.40.170.10">
    <property type="entry name" value="Porin, LamB type"/>
    <property type="match status" value="1"/>
</dbReference>
<dbReference type="HAMAP" id="MF_01301">
    <property type="entry name" value="LamB"/>
    <property type="match status" value="1"/>
</dbReference>
<dbReference type="InterPro" id="IPR050286">
    <property type="entry name" value="G_neg_Bact_CarbUptk_Porin"/>
</dbReference>
<dbReference type="InterPro" id="IPR023738">
    <property type="entry name" value="Maltoporin"/>
</dbReference>
<dbReference type="InterPro" id="IPR003192">
    <property type="entry name" value="Porin_LamB"/>
</dbReference>
<dbReference type="InterPro" id="IPR036998">
    <property type="entry name" value="Porin_LamB_sf"/>
</dbReference>
<dbReference type="NCBIfam" id="NF006860">
    <property type="entry name" value="PRK09360.1"/>
    <property type="match status" value="1"/>
</dbReference>
<dbReference type="NCBIfam" id="NF009061">
    <property type="entry name" value="PRK12395.1"/>
    <property type="match status" value="1"/>
</dbReference>
<dbReference type="PANTHER" id="PTHR38762">
    <property type="entry name" value="CRYPTIC OUTER MEMBRANE PORIN BGLH-RELATED"/>
    <property type="match status" value="1"/>
</dbReference>
<dbReference type="PANTHER" id="PTHR38762:SF1">
    <property type="entry name" value="CRYPTIC OUTER MEMBRANE PORIN BGLH-RELATED"/>
    <property type="match status" value="1"/>
</dbReference>
<dbReference type="Pfam" id="PF02264">
    <property type="entry name" value="LamB"/>
    <property type="match status" value="1"/>
</dbReference>
<dbReference type="SUPFAM" id="SSF56935">
    <property type="entry name" value="Porins"/>
    <property type="match status" value="1"/>
</dbReference>
<sequence length="419" mass="46264">MKTSLRTLSVALAAALVSPSVLAIEKIDFHGYMRAGVGVSSDGGLAEWQKTMVGRLGNESDTYGEIGLGAEVYKKEDVSFYLDSMVSMLSDGSNDSETTIGDDAQFGLRQLNLQIKGLIPGDKEAVIWGGKRYYQRHDLHIIDTKYWNISGSGAGIENYTVGPGAVSVAWVRGDANDVDTRITGDSDVNINYIDVRYAGFKPWAGSWTEVGIDYAMPNPTKQQKEYGGLYDADNAVMLTGEISQDMFGGYNKLVLQYANKGLAQNMISQGGGWYDMWHKTDEAKGYRVINTGLIPITDKFSFNHVLTWGSANDITEYTDKTNLISLVGRAQYQFTQYVRAIGEVGGFYQKDTYHNGSNYKQGGEKYTIALGLAEGPDFLSRPELRVFASYLNDSENGKPFEDGTSNDTWNFGVQVEAWW</sequence>
<name>LAMB2_YERPE</name>
<gene>
    <name evidence="1" type="primary">lamB2</name>
    <name type="ordered locus">YPO0850</name>
    <name type="ordered locus">y3235</name>
    <name type="ordered locus">YP_3547</name>
</gene>
<evidence type="ECO:0000255" key="1">
    <source>
        <dbReference type="HAMAP-Rule" id="MF_01301"/>
    </source>
</evidence>
<evidence type="ECO:0000305" key="2"/>